<dbReference type="EMBL" id="AB168718">
    <property type="protein sequence ID" value="BAE00828.1"/>
    <property type="molecule type" value="mRNA"/>
</dbReference>
<dbReference type="RefSeq" id="NP_001271512.1">
    <property type="nucleotide sequence ID" value="NM_001284583.1"/>
</dbReference>
<dbReference type="SMR" id="Q4R7U4"/>
<dbReference type="STRING" id="9541.ENSMFAP00000010751"/>
<dbReference type="eggNOG" id="KOG2496">
    <property type="taxonomic scope" value="Eukaryota"/>
</dbReference>
<dbReference type="Proteomes" id="UP000233100">
    <property type="component" value="Unplaced"/>
</dbReference>
<dbReference type="GO" id="GO:0005675">
    <property type="term" value="C:transcription factor TFIIH holo complex"/>
    <property type="evidence" value="ECO:0000250"/>
    <property type="project" value="UniProtKB"/>
</dbReference>
<dbReference type="GO" id="GO:0070985">
    <property type="term" value="C:transcription factor TFIIK complex"/>
    <property type="evidence" value="ECO:0007669"/>
    <property type="project" value="InterPro"/>
</dbReference>
<dbReference type="GO" id="GO:0016538">
    <property type="term" value="F:cyclin-dependent protein serine/threonine kinase regulator activity"/>
    <property type="evidence" value="ECO:0007669"/>
    <property type="project" value="InterPro"/>
</dbReference>
<dbReference type="GO" id="GO:0006351">
    <property type="term" value="P:DNA-templated transcription"/>
    <property type="evidence" value="ECO:0007669"/>
    <property type="project" value="InterPro"/>
</dbReference>
<dbReference type="GO" id="GO:0006357">
    <property type="term" value="P:regulation of transcription by RNA polymerase II"/>
    <property type="evidence" value="ECO:0000250"/>
    <property type="project" value="UniProtKB"/>
</dbReference>
<dbReference type="CDD" id="cd20524">
    <property type="entry name" value="CYCLIN_CCNH_rpt1"/>
    <property type="match status" value="1"/>
</dbReference>
<dbReference type="CDD" id="cd20525">
    <property type="entry name" value="CYCLIN_CCNH_rpt2"/>
    <property type="match status" value="1"/>
</dbReference>
<dbReference type="FunFam" id="1.10.472.10:FF:000029">
    <property type="entry name" value="Cyclin h"/>
    <property type="match status" value="1"/>
</dbReference>
<dbReference type="FunFam" id="1.10.472.10:FF:000044">
    <property type="entry name" value="cyclin-H isoform X1"/>
    <property type="match status" value="1"/>
</dbReference>
<dbReference type="Gene3D" id="1.10.472.10">
    <property type="entry name" value="Cyclin-like"/>
    <property type="match status" value="2"/>
</dbReference>
<dbReference type="InterPro" id="IPR013763">
    <property type="entry name" value="Cyclin-like_dom"/>
</dbReference>
<dbReference type="InterPro" id="IPR036915">
    <property type="entry name" value="Cyclin-like_sf"/>
</dbReference>
<dbReference type="InterPro" id="IPR043198">
    <property type="entry name" value="Cyclin/Ssn8"/>
</dbReference>
<dbReference type="InterPro" id="IPR031658">
    <property type="entry name" value="Cyclin_C_2"/>
</dbReference>
<dbReference type="InterPro" id="IPR006671">
    <property type="entry name" value="Cyclin_N"/>
</dbReference>
<dbReference type="InterPro" id="IPR027081">
    <property type="entry name" value="CyclinH/Ccl1"/>
</dbReference>
<dbReference type="NCBIfam" id="TIGR00569">
    <property type="entry name" value="ccl1"/>
    <property type="match status" value="1"/>
</dbReference>
<dbReference type="PANTHER" id="PTHR10026">
    <property type="entry name" value="CYCLIN"/>
    <property type="match status" value="1"/>
</dbReference>
<dbReference type="Pfam" id="PF16899">
    <property type="entry name" value="Cyclin_C_2"/>
    <property type="match status" value="1"/>
</dbReference>
<dbReference type="Pfam" id="PF00134">
    <property type="entry name" value="Cyclin_N"/>
    <property type="match status" value="1"/>
</dbReference>
<dbReference type="SMART" id="SM00385">
    <property type="entry name" value="CYCLIN"/>
    <property type="match status" value="1"/>
</dbReference>
<dbReference type="SUPFAM" id="SSF47954">
    <property type="entry name" value="Cyclin-like"/>
    <property type="match status" value="2"/>
</dbReference>
<feature type="chain" id="PRO_0000273975" description="Cyclin-H">
    <location>
        <begin position="1"/>
        <end position="323"/>
    </location>
</feature>
<feature type="region of interest" description="Disordered" evidence="3">
    <location>
        <begin position="299"/>
        <end position="323"/>
    </location>
</feature>
<feature type="compositionally biased region" description="Basic and acidic residues" evidence="3">
    <location>
        <begin position="302"/>
        <end position="311"/>
    </location>
</feature>
<feature type="compositionally biased region" description="Acidic residues" evidence="3">
    <location>
        <begin position="312"/>
        <end position="323"/>
    </location>
</feature>
<feature type="modified residue" description="Phosphoserine; by CDK8" evidence="2">
    <location>
        <position position="5"/>
    </location>
</feature>
<feature type="modified residue" description="Phosphoserine" evidence="2">
    <location>
        <position position="132"/>
    </location>
</feature>
<feature type="modified residue" description="Phosphothreonine" evidence="2">
    <location>
        <position position="315"/>
    </location>
</feature>
<feature type="modified residue" description="Phosphoserine" evidence="2">
    <location>
        <position position="322"/>
    </location>
</feature>
<name>CCNH_MACFA</name>
<proteinExistence type="evidence at transcript level"/>
<gene>
    <name type="primary">CCNH</name>
    <name type="ORF">QtsA-14371</name>
</gene>
<accession>Q4R7U4</accession>
<reference key="1">
    <citation type="submission" date="2005-06" db="EMBL/GenBank/DDBJ databases">
        <title>DNA sequences of macaque genes expressed in brain or testis and its evolutionary implications.</title>
        <authorList>
            <consortium name="International consortium for macaque cDNA sequencing and analysis"/>
        </authorList>
    </citation>
    <scope>NUCLEOTIDE SEQUENCE [LARGE SCALE MRNA]</scope>
    <source>
        <tissue>Testis</tissue>
    </source>
</reference>
<keyword id="KW-0131">Cell cycle</keyword>
<keyword id="KW-0195">Cyclin</keyword>
<keyword id="KW-0539">Nucleus</keyword>
<keyword id="KW-0597">Phosphoprotein</keyword>
<keyword id="KW-1185">Reference proteome</keyword>
<keyword id="KW-0804">Transcription</keyword>
<keyword id="KW-0805">Transcription regulation</keyword>
<sequence length="323" mass="37681">MYHNSSQKRHWTFSSEEQLARLRADANRKFRCKAVANGKVLPNDPVFLEPHEEMTLCKYYEKRLLEFCSVFKPAMPRSVVGTACMYFKRFYLNNSVMEYHPRIIMLTCAFLACKVDEFNVSSPQFVGNLRESPLGQEKALEQILEYELLLIQQLNFHLIVHNPYRPFEGFLIDLKTRYPILENPEILRKTADDFLNRIALTDAYLLYTPSQIALTAILSSASRAGITMESYLSESLMLRENRTCLSQLLDIMKSMRNLVKKYEPPRSEEVAVLKQKLERCHSAELALNVITKKRKGYEDDDYVPKKSKHEEEEWTDDDLVESL</sequence>
<organism>
    <name type="scientific">Macaca fascicularis</name>
    <name type="common">Crab-eating macaque</name>
    <name type="synonym">Cynomolgus monkey</name>
    <dbReference type="NCBI Taxonomy" id="9541"/>
    <lineage>
        <taxon>Eukaryota</taxon>
        <taxon>Metazoa</taxon>
        <taxon>Chordata</taxon>
        <taxon>Craniata</taxon>
        <taxon>Vertebrata</taxon>
        <taxon>Euteleostomi</taxon>
        <taxon>Mammalia</taxon>
        <taxon>Eutheria</taxon>
        <taxon>Euarchontoglires</taxon>
        <taxon>Primates</taxon>
        <taxon>Haplorrhini</taxon>
        <taxon>Catarrhini</taxon>
        <taxon>Cercopithecidae</taxon>
        <taxon>Cercopithecinae</taxon>
        <taxon>Macaca</taxon>
    </lineage>
</organism>
<evidence type="ECO:0000250" key="1"/>
<evidence type="ECO:0000250" key="2">
    <source>
        <dbReference type="UniProtKB" id="P51946"/>
    </source>
</evidence>
<evidence type="ECO:0000256" key="3">
    <source>
        <dbReference type="SAM" id="MobiDB-lite"/>
    </source>
</evidence>
<evidence type="ECO:0000305" key="4"/>
<comment type="function">
    <text evidence="1">Regulates CDK7, the catalytic subunit of the CDK-activating kinase (CAK) enzymatic complex. CAK activates the cyclin-associated kinases CDK1, CDK2, CDK4 and CDK6 by threonine phosphorylation. CAK complexed to the core-TFIIH basal transcription factor activates RNA polymerase II by serine phosphorylation of the repetitive C-terminal domain (CTD) of its large subunit (POLR2A), allowing its escape from the promoter and elongation of the transcripts. Involved in cell cycle control and in RNA transcription by RNA polymerase II. Its expression and activity are constant throughout the cell cycle (By similarity).</text>
</comment>
<comment type="subunit">
    <text evidence="1">Associates primarily with CDK7 and MAT1 to form the CAK complex. CAK can further associate with the core-TFIIH to form the TFIIH basal transcription factor (By similarity).</text>
</comment>
<comment type="subcellular location">
    <subcellularLocation>
        <location evidence="1">Nucleus</location>
    </subcellularLocation>
</comment>
<comment type="similarity">
    <text evidence="4">Belongs to the cyclin family. Cyclin C subfamily.</text>
</comment>
<protein>
    <recommendedName>
        <fullName>Cyclin-H</fullName>
    </recommendedName>
</protein>